<reference key="1">
    <citation type="journal article" date="2009" name="Genome Biol.">
        <title>Genomic and genetic analyses of diversity and plant interactions of Pseudomonas fluorescens.</title>
        <authorList>
            <person name="Silby M.W."/>
            <person name="Cerdeno-Tarraga A.M."/>
            <person name="Vernikos G.S."/>
            <person name="Giddens S.R."/>
            <person name="Jackson R.W."/>
            <person name="Preston G.M."/>
            <person name="Zhang X.-X."/>
            <person name="Moon C.D."/>
            <person name="Gehrig S.M."/>
            <person name="Godfrey S.A.C."/>
            <person name="Knight C.G."/>
            <person name="Malone J.G."/>
            <person name="Robinson Z."/>
            <person name="Spiers A.J."/>
            <person name="Harris S."/>
            <person name="Challis G.L."/>
            <person name="Yaxley A.M."/>
            <person name="Harris D."/>
            <person name="Seeger K."/>
            <person name="Murphy L."/>
            <person name="Rutter S."/>
            <person name="Squares R."/>
            <person name="Quail M.A."/>
            <person name="Saunders E."/>
            <person name="Mavromatis K."/>
            <person name="Brettin T.S."/>
            <person name="Bentley S.D."/>
            <person name="Hothersall J."/>
            <person name="Stephens E."/>
            <person name="Thomas C.M."/>
            <person name="Parkhill J."/>
            <person name="Levy S.B."/>
            <person name="Rainey P.B."/>
            <person name="Thomson N.R."/>
        </authorList>
    </citation>
    <scope>NUCLEOTIDE SEQUENCE [LARGE SCALE GENOMIC DNA]</scope>
    <source>
        <strain>SBW25</strain>
    </source>
</reference>
<evidence type="ECO:0000255" key="1">
    <source>
        <dbReference type="HAMAP-Rule" id="MF_01105"/>
    </source>
</evidence>
<proteinExistence type="inferred from homology"/>
<feature type="chain" id="PRO_1000213560" description="Amino-acid acetyltransferase">
    <location>
        <begin position="1"/>
        <end position="433"/>
    </location>
</feature>
<feature type="domain" description="N-acetyltransferase" evidence="1">
    <location>
        <begin position="287"/>
        <end position="426"/>
    </location>
</feature>
<accession>C3K3V3</accession>
<comment type="catalytic activity">
    <reaction evidence="1">
        <text>L-glutamate + acetyl-CoA = N-acetyl-L-glutamate + CoA + H(+)</text>
        <dbReference type="Rhea" id="RHEA:24292"/>
        <dbReference type="ChEBI" id="CHEBI:15378"/>
        <dbReference type="ChEBI" id="CHEBI:29985"/>
        <dbReference type="ChEBI" id="CHEBI:44337"/>
        <dbReference type="ChEBI" id="CHEBI:57287"/>
        <dbReference type="ChEBI" id="CHEBI:57288"/>
        <dbReference type="EC" id="2.3.1.1"/>
    </reaction>
</comment>
<comment type="pathway">
    <text evidence="1">Amino-acid biosynthesis; L-arginine biosynthesis; N(2)-acetyl-L-ornithine from L-glutamate: step 1/4.</text>
</comment>
<comment type="subcellular location">
    <subcellularLocation>
        <location evidence="1">Cytoplasm</location>
    </subcellularLocation>
</comment>
<comment type="similarity">
    <text evidence="1">Belongs to the acetyltransferase family. ArgA subfamily.</text>
</comment>
<keyword id="KW-0012">Acyltransferase</keyword>
<keyword id="KW-0028">Amino-acid biosynthesis</keyword>
<keyword id="KW-0055">Arginine biosynthesis</keyword>
<keyword id="KW-0963">Cytoplasm</keyword>
<keyword id="KW-0808">Transferase</keyword>
<name>ARGA_PSEFS</name>
<gene>
    <name evidence="1" type="primary">argA</name>
    <name type="ordered locus">PFLU_5862</name>
</gene>
<dbReference type="EC" id="2.3.1.1" evidence="1"/>
<dbReference type="EMBL" id="AM181176">
    <property type="protein sequence ID" value="CAY53306.1"/>
    <property type="molecule type" value="Genomic_DNA"/>
</dbReference>
<dbReference type="RefSeq" id="WP_015886427.1">
    <property type="nucleotide sequence ID" value="NC_012660.1"/>
</dbReference>
<dbReference type="SMR" id="C3K3V3"/>
<dbReference type="STRING" id="294.SRM1_05564"/>
<dbReference type="GeneID" id="93467489"/>
<dbReference type="eggNOG" id="COG0548">
    <property type="taxonomic scope" value="Bacteria"/>
</dbReference>
<dbReference type="eggNOG" id="COG1246">
    <property type="taxonomic scope" value="Bacteria"/>
</dbReference>
<dbReference type="HOGENOM" id="CLU_024773_0_0_6"/>
<dbReference type="OrthoDB" id="9802238at2"/>
<dbReference type="UniPathway" id="UPA00068">
    <property type="reaction ID" value="UER00106"/>
</dbReference>
<dbReference type="GO" id="GO:0005737">
    <property type="term" value="C:cytoplasm"/>
    <property type="evidence" value="ECO:0007669"/>
    <property type="project" value="UniProtKB-SubCell"/>
</dbReference>
<dbReference type="GO" id="GO:0004042">
    <property type="term" value="F:L-glutamate N-acetyltransferase activity"/>
    <property type="evidence" value="ECO:0007669"/>
    <property type="project" value="UniProtKB-UniRule"/>
</dbReference>
<dbReference type="GO" id="GO:0006526">
    <property type="term" value="P:L-arginine biosynthetic process"/>
    <property type="evidence" value="ECO:0007669"/>
    <property type="project" value="UniProtKB-UniRule"/>
</dbReference>
<dbReference type="CDD" id="cd04237">
    <property type="entry name" value="AAK_NAGS-ABP"/>
    <property type="match status" value="1"/>
</dbReference>
<dbReference type="CDD" id="cd04301">
    <property type="entry name" value="NAT_SF"/>
    <property type="match status" value="1"/>
</dbReference>
<dbReference type="Gene3D" id="3.40.630.30">
    <property type="match status" value="1"/>
</dbReference>
<dbReference type="Gene3D" id="3.40.1160.10">
    <property type="entry name" value="Acetylglutamate kinase-like"/>
    <property type="match status" value="1"/>
</dbReference>
<dbReference type="HAMAP" id="MF_01105">
    <property type="entry name" value="N_acetyl_glu_synth"/>
    <property type="match status" value="1"/>
</dbReference>
<dbReference type="InterPro" id="IPR036393">
    <property type="entry name" value="AceGlu_kinase-like_sf"/>
</dbReference>
<dbReference type="InterPro" id="IPR016181">
    <property type="entry name" value="Acyl_CoA_acyltransferase"/>
</dbReference>
<dbReference type="InterPro" id="IPR001048">
    <property type="entry name" value="Asp/Glu/Uridylate_kinase"/>
</dbReference>
<dbReference type="InterPro" id="IPR000182">
    <property type="entry name" value="GNAT_dom"/>
</dbReference>
<dbReference type="InterPro" id="IPR033719">
    <property type="entry name" value="NAGS_kin"/>
</dbReference>
<dbReference type="InterPro" id="IPR010167">
    <property type="entry name" value="NH2A_AcTrfase"/>
</dbReference>
<dbReference type="NCBIfam" id="TIGR01890">
    <property type="entry name" value="N-Ac-Glu-synth"/>
    <property type="match status" value="1"/>
</dbReference>
<dbReference type="NCBIfam" id="NF003641">
    <property type="entry name" value="PRK05279.1"/>
    <property type="match status" value="1"/>
</dbReference>
<dbReference type="PANTHER" id="PTHR30602">
    <property type="entry name" value="AMINO-ACID ACETYLTRANSFERASE"/>
    <property type="match status" value="1"/>
</dbReference>
<dbReference type="PANTHER" id="PTHR30602:SF12">
    <property type="entry name" value="AMINO-ACID ACETYLTRANSFERASE NAGS1, CHLOROPLASTIC-RELATED"/>
    <property type="match status" value="1"/>
</dbReference>
<dbReference type="Pfam" id="PF00696">
    <property type="entry name" value="AA_kinase"/>
    <property type="match status" value="1"/>
</dbReference>
<dbReference type="Pfam" id="PF13508">
    <property type="entry name" value="Acetyltransf_7"/>
    <property type="match status" value="1"/>
</dbReference>
<dbReference type="PIRSF" id="PIRSF000423">
    <property type="entry name" value="ArgA"/>
    <property type="match status" value="1"/>
</dbReference>
<dbReference type="SUPFAM" id="SSF55729">
    <property type="entry name" value="Acyl-CoA N-acyltransferases (Nat)"/>
    <property type="match status" value="1"/>
</dbReference>
<dbReference type="SUPFAM" id="SSF53633">
    <property type="entry name" value="Carbamate kinase-like"/>
    <property type="match status" value="1"/>
</dbReference>
<dbReference type="PROSITE" id="PS51186">
    <property type="entry name" value="GNAT"/>
    <property type="match status" value="1"/>
</dbReference>
<organism>
    <name type="scientific">Pseudomonas fluorescens (strain SBW25)</name>
    <dbReference type="NCBI Taxonomy" id="216595"/>
    <lineage>
        <taxon>Bacteria</taxon>
        <taxon>Pseudomonadati</taxon>
        <taxon>Pseudomonadota</taxon>
        <taxon>Gammaproteobacteria</taxon>
        <taxon>Pseudomonadales</taxon>
        <taxon>Pseudomonadaceae</taxon>
        <taxon>Pseudomonas</taxon>
    </lineage>
</organism>
<protein>
    <recommendedName>
        <fullName evidence="1">Amino-acid acetyltransferase</fullName>
        <ecNumber evidence="1">2.3.1.1</ecNumber>
    </recommendedName>
    <alternativeName>
        <fullName evidence="1">N-acetylglutamate synthase</fullName>
        <shortName evidence="1">AGS</shortName>
        <shortName evidence="1">NAGS</shortName>
    </alternativeName>
</protein>
<sequence length="433" mass="47823">MPEYVNWLRHASPYINAHRDCTFVVMLPGDGVEHPNFGNIVHDLVLLHSLGVRLVLVHGSRPQIEVRLEARGLTPTYHEGMRITDAATLECVIDAVGHLRIAIEARLSMDMASSPMQGSRLRVTSGNFVTARPIGVLEGVDYHHTGEVRRVDRKGINRLLDERSIVLLSPLGYSPTGEIFNLACEDVATRAAIDLGADKLLLFGADLGLIDENGRLVRELRPQQVPAHLQRLGSSNYQAELLDAAAEACRGGVGRSHIVSYAEDGALLTELFTRDGGGTLVAQEQFELVREAAIEDVGGLLDLISPLEEQGILVRRSREVLEREIEQFSVVEREGMIIACAALYQIADSDAGELACLAVNPEYRHGARGDVLLERIQTRARAQGLKTLFVLTTRTAHWFRERGFVPSSVDRLPSARASLYNYQRNSKIFEKAL</sequence>